<organism>
    <name type="scientific">Cereibacter sphaeroides (strain ATCC 17025 / ATH 2.4.3)</name>
    <name type="common">Rhodobacter sphaeroides</name>
    <dbReference type="NCBI Taxonomy" id="349102"/>
    <lineage>
        <taxon>Bacteria</taxon>
        <taxon>Pseudomonadati</taxon>
        <taxon>Pseudomonadota</taxon>
        <taxon>Alphaproteobacteria</taxon>
        <taxon>Rhodobacterales</taxon>
        <taxon>Paracoccaceae</taxon>
        <taxon>Cereibacter</taxon>
    </lineage>
</organism>
<protein>
    <recommendedName>
        <fullName evidence="1">Large ribosomal subunit protein uL15</fullName>
    </recommendedName>
    <alternativeName>
        <fullName evidence="3">50S ribosomal protein L15</fullName>
    </alternativeName>
</protein>
<sequence>MKLNELRDNEGAARKKKRVARGPGSGKGKTAGRGIKGQKSRSGVALNGYEGGQMPLYRRLPKRGFSKPNRKEYAVVNLGLIQKFVDAGKLDASQPIDENAIVAAGVTSHKRDGIRVLAKGEITAKLTLTVAGASKSAVEAVEKAGGSITLTAPAAAASAE</sequence>
<reference key="1">
    <citation type="submission" date="2007-04" db="EMBL/GenBank/DDBJ databases">
        <title>Complete sequence of chromosome of Rhodobacter sphaeroides ATCC 17025.</title>
        <authorList>
            <consortium name="US DOE Joint Genome Institute"/>
            <person name="Copeland A."/>
            <person name="Lucas S."/>
            <person name="Lapidus A."/>
            <person name="Barry K."/>
            <person name="Detter J.C."/>
            <person name="Glavina del Rio T."/>
            <person name="Hammon N."/>
            <person name="Israni S."/>
            <person name="Dalin E."/>
            <person name="Tice H."/>
            <person name="Pitluck S."/>
            <person name="Chertkov O."/>
            <person name="Brettin T."/>
            <person name="Bruce D."/>
            <person name="Han C."/>
            <person name="Schmutz J."/>
            <person name="Larimer F."/>
            <person name="Land M."/>
            <person name="Hauser L."/>
            <person name="Kyrpides N."/>
            <person name="Kim E."/>
            <person name="Richardson P."/>
            <person name="Mackenzie C."/>
            <person name="Choudhary M."/>
            <person name="Donohue T.J."/>
            <person name="Kaplan S."/>
        </authorList>
    </citation>
    <scope>NUCLEOTIDE SEQUENCE [LARGE SCALE GENOMIC DNA]</scope>
    <source>
        <strain>ATCC 17025 / ATH 2.4.3</strain>
    </source>
</reference>
<name>RL15_CERS5</name>
<comment type="function">
    <text evidence="1">Binds to the 23S rRNA.</text>
</comment>
<comment type="subunit">
    <text evidence="1">Part of the 50S ribosomal subunit.</text>
</comment>
<comment type="similarity">
    <text evidence="1">Belongs to the universal ribosomal protein uL15 family.</text>
</comment>
<dbReference type="EMBL" id="CP000661">
    <property type="protein sequence ID" value="ABP71403.1"/>
    <property type="molecule type" value="Genomic_DNA"/>
</dbReference>
<dbReference type="SMR" id="A4WVI9"/>
<dbReference type="STRING" id="349102.Rsph17025_2515"/>
<dbReference type="KEGG" id="rsq:Rsph17025_2515"/>
<dbReference type="eggNOG" id="COG0200">
    <property type="taxonomic scope" value="Bacteria"/>
</dbReference>
<dbReference type="HOGENOM" id="CLU_055188_4_0_5"/>
<dbReference type="BioCyc" id="RSPH349102:G1G8M-2593-MONOMER"/>
<dbReference type="GO" id="GO:0015934">
    <property type="term" value="C:large ribosomal subunit"/>
    <property type="evidence" value="ECO:0007669"/>
    <property type="project" value="InterPro"/>
</dbReference>
<dbReference type="GO" id="GO:0019843">
    <property type="term" value="F:rRNA binding"/>
    <property type="evidence" value="ECO:0007669"/>
    <property type="project" value="UniProtKB-UniRule"/>
</dbReference>
<dbReference type="GO" id="GO:0003735">
    <property type="term" value="F:structural constituent of ribosome"/>
    <property type="evidence" value="ECO:0007669"/>
    <property type="project" value="InterPro"/>
</dbReference>
<dbReference type="GO" id="GO:0006412">
    <property type="term" value="P:translation"/>
    <property type="evidence" value="ECO:0007669"/>
    <property type="project" value="UniProtKB-UniRule"/>
</dbReference>
<dbReference type="Gene3D" id="3.100.10.10">
    <property type="match status" value="1"/>
</dbReference>
<dbReference type="HAMAP" id="MF_01341">
    <property type="entry name" value="Ribosomal_uL15"/>
    <property type="match status" value="1"/>
</dbReference>
<dbReference type="InterPro" id="IPR030878">
    <property type="entry name" value="Ribosomal_uL15"/>
</dbReference>
<dbReference type="InterPro" id="IPR021131">
    <property type="entry name" value="Ribosomal_uL15/eL18"/>
</dbReference>
<dbReference type="InterPro" id="IPR036227">
    <property type="entry name" value="Ribosomal_uL15/eL18_sf"/>
</dbReference>
<dbReference type="InterPro" id="IPR005749">
    <property type="entry name" value="Ribosomal_uL15_bac-type"/>
</dbReference>
<dbReference type="InterPro" id="IPR001196">
    <property type="entry name" value="Ribosomal_uL15_CS"/>
</dbReference>
<dbReference type="NCBIfam" id="TIGR01071">
    <property type="entry name" value="rplO_bact"/>
    <property type="match status" value="1"/>
</dbReference>
<dbReference type="PANTHER" id="PTHR12934">
    <property type="entry name" value="50S RIBOSOMAL PROTEIN L15"/>
    <property type="match status" value="1"/>
</dbReference>
<dbReference type="PANTHER" id="PTHR12934:SF11">
    <property type="entry name" value="LARGE RIBOSOMAL SUBUNIT PROTEIN UL15M"/>
    <property type="match status" value="1"/>
</dbReference>
<dbReference type="Pfam" id="PF00828">
    <property type="entry name" value="Ribosomal_L27A"/>
    <property type="match status" value="1"/>
</dbReference>
<dbReference type="SUPFAM" id="SSF52080">
    <property type="entry name" value="Ribosomal proteins L15p and L18e"/>
    <property type="match status" value="1"/>
</dbReference>
<dbReference type="PROSITE" id="PS00475">
    <property type="entry name" value="RIBOSOMAL_L15"/>
    <property type="match status" value="1"/>
</dbReference>
<proteinExistence type="inferred from homology"/>
<accession>A4WVI9</accession>
<evidence type="ECO:0000255" key="1">
    <source>
        <dbReference type="HAMAP-Rule" id="MF_01341"/>
    </source>
</evidence>
<evidence type="ECO:0000256" key="2">
    <source>
        <dbReference type="SAM" id="MobiDB-lite"/>
    </source>
</evidence>
<evidence type="ECO:0000305" key="3"/>
<feature type="chain" id="PRO_1000054527" description="Large ribosomal subunit protein uL15">
    <location>
        <begin position="1"/>
        <end position="160"/>
    </location>
</feature>
<feature type="region of interest" description="Disordered" evidence="2">
    <location>
        <begin position="1"/>
        <end position="51"/>
    </location>
</feature>
<feature type="compositionally biased region" description="Basic and acidic residues" evidence="2">
    <location>
        <begin position="1"/>
        <end position="13"/>
    </location>
</feature>
<feature type="compositionally biased region" description="Gly residues" evidence="2">
    <location>
        <begin position="23"/>
        <end position="35"/>
    </location>
</feature>
<keyword id="KW-0687">Ribonucleoprotein</keyword>
<keyword id="KW-0689">Ribosomal protein</keyword>
<keyword id="KW-0694">RNA-binding</keyword>
<keyword id="KW-0699">rRNA-binding</keyword>
<gene>
    <name evidence="1" type="primary">rplO</name>
    <name type="ordered locus">Rsph17025_2515</name>
</gene>